<keyword id="KW-0333">Golgi apparatus</keyword>
<keyword id="KW-0449">Lipoprotein</keyword>
<keyword id="KW-0472">Membrane</keyword>
<keyword id="KW-0479">Metal-binding</keyword>
<keyword id="KW-0519">Myristate</keyword>
<keyword id="KW-0597">Phosphoprotein</keyword>
<keyword id="KW-0653">Protein transport</keyword>
<keyword id="KW-1185">Reference proteome</keyword>
<keyword id="KW-0677">Repeat</keyword>
<keyword id="KW-0813">Transport</keyword>
<keyword id="KW-0862">Zinc</keyword>
<accession>Q91X51</accession>
<accession>Q9D3L9</accession>
<name>GORS1_MOUSE</name>
<protein>
    <recommendedName>
        <fullName>Golgi reassembly-stacking protein 1</fullName>
    </recommendedName>
    <alternativeName>
        <fullName>Golgi peripheral membrane protein p65</fullName>
    </alternativeName>
    <alternativeName>
        <fullName>Golgi reassembly-stacking protein of 65 kDa</fullName>
        <shortName>GRASP65</shortName>
    </alternativeName>
</protein>
<reference key="1">
    <citation type="journal article" date="2004" name="Genome Res.">
        <title>The status, quality, and expansion of the NIH full-length cDNA project: the Mammalian Gene Collection (MGC).</title>
        <authorList>
            <consortium name="The MGC Project Team"/>
        </authorList>
    </citation>
    <scope>NUCLEOTIDE SEQUENCE [LARGE SCALE MRNA]</scope>
    <source>
        <strain>FVB/N</strain>
        <tissue>Salivary gland</tissue>
    </source>
</reference>
<reference key="2">
    <citation type="journal article" date="2005" name="Science">
        <title>The transcriptional landscape of the mammalian genome.</title>
        <authorList>
            <person name="Carninci P."/>
            <person name="Kasukawa T."/>
            <person name="Katayama S."/>
            <person name="Gough J."/>
            <person name="Frith M.C."/>
            <person name="Maeda N."/>
            <person name="Oyama R."/>
            <person name="Ravasi T."/>
            <person name="Lenhard B."/>
            <person name="Wells C."/>
            <person name="Kodzius R."/>
            <person name="Shimokawa K."/>
            <person name="Bajic V.B."/>
            <person name="Brenner S.E."/>
            <person name="Batalov S."/>
            <person name="Forrest A.R."/>
            <person name="Zavolan M."/>
            <person name="Davis M.J."/>
            <person name="Wilming L.G."/>
            <person name="Aidinis V."/>
            <person name="Allen J.E."/>
            <person name="Ambesi-Impiombato A."/>
            <person name="Apweiler R."/>
            <person name="Aturaliya R.N."/>
            <person name="Bailey T.L."/>
            <person name="Bansal M."/>
            <person name="Baxter L."/>
            <person name="Beisel K.W."/>
            <person name="Bersano T."/>
            <person name="Bono H."/>
            <person name="Chalk A.M."/>
            <person name="Chiu K.P."/>
            <person name="Choudhary V."/>
            <person name="Christoffels A."/>
            <person name="Clutterbuck D.R."/>
            <person name="Crowe M.L."/>
            <person name="Dalla E."/>
            <person name="Dalrymple B.P."/>
            <person name="de Bono B."/>
            <person name="Della Gatta G."/>
            <person name="di Bernardo D."/>
            <person name="Down T."/>
            <person name="Engstrom P."/>
            <person name="Fagiolini M."/>
            <person name="Faulkner G."/>
            <person name="Fletcher C.F."/>
            <person name="Fukushima T."/>
            <person name="Furuno M."/>
            <person name="Futaki S."/>
            <person name="Gariboldi M."/>
            <person name="Georgii-Hemming P."/>
            <person name="Gingeras T.R."/>
            <person name="Gojobori T."/>
            <person name="Green R.E."/>
            <person name="Gustincich S."/>
            <person name="Harbers M."/>
            <person name="Hayashi Y."/>
            <person name="Hensch T.K."/>
            <person name="Hirokawa N."/>
            <person name="Hill D."/>
            <person name="Huminiecki L."/>
            <person name="Iacono M."/>
            <person name="Ikeo K."/>
            <person name="Iwama A."/>
            <person name="Ishikawa T."/>
            <person name="Jakt M."/>
            <person name="Kanapin A."/>
            <person name="Katoh M."/>
            <person name="Kawasawa Y."/>
            <person name="Kelso J."/>
            <person name="Kitamura H."/>
            <person name="Kitano H."/>
            <person name="Kollias G."/>
            <person name="Krishnan S.P."/>
            <person name="Kruger A."/>
            <person name="Kummerfeld S.K."/>
            <person name="Kurochkin I.V."/>
            <person name="Lareau L.F."/>
            <person name="Lazarevic D."/>
            <person name="Lipovich L."/>
            <person name="Liu J."/>
            <person name="Liuni S."/>
            <person name="McWilliam S."/>
            <person name="Madan Babu M."/>
            <person name="Madera M."/>
            <person name="Marchionni L."/>
            <person name="Matsuda H."/>
            <person name="Matsuzawa S."/>
            <person name="Miki H."/>
            <person name="Mignone F."/>
            <person name="Miyake S."/>
            <person name="Morris K."/>
            <person name="Mottagui-Tabar S."/>
            <person name="Mulder N."/>
            <person name="Nakano N."/>
            <person name="Nakauchi H."/>
            <person name="Ng P."/>
            <person name="Nilsson R."/>
            <person name="Nishiguchi S."/>
            <person name="Nishikawa S."/>
            <person name="Nori F."/>
            <person name="Ohara O."/>
            <person name="Okazaki Y."/>
            <person name="Orlando V."/>
            <person name="Pang K.C."/>
            <person name="Pavan W.J."/>
            <person name="Pavesi G."/>
            <person name="Pesole G."/>
            <person name="Petrovsky N."/>
            <person name="Piazza S."/>
            <person name="Reed J."/>
            <person name="Reid J.F."/>
            <person name="Ring B.Z."/>
            <person name="Ringwald M."/>
            <person name="Rost B."/>
            <person name="Ruan Y."/>
            <person name="Salzberg S.L."/>
            <person name="Sandelin A."/>
            <person name="Schneider C."/>
            <person name="Schoenbach C."/>
            <person name="Sekiguchi K."/>
            <person name="Semple C.A."/>
            <person name="Seno S."/>
            <person name="Sessa L."/>
            <person name="Sheng Y."/>
            <person name="Shibata Y."/>
            <person name="Shimada H."/>
            <person name="Shimada K."/>
            <person name="Silva D."/>
            <person name="Sinclair B."/>
            <person name="Sperling S."/>
            <person name="Stupka E."/>
            <person name="Sugiura K."/>
            <person name="Sultana R."/>
            <person name="Takenaka Y."/>
            <person name="Taki K."/>
            <person name="Tammoja K."/>
            <person name="Tan S.L."/>
            <person name="Tang S."/>
            <person name="Taylor M.S."/>
            <person name="Tegner J."/>
            <person name="Teichmann S.A."/>
            <person name="Ueda H.R."/>
            <person name="van Nimwegen E."/>
            <person name="Verardo R."/>
            <person name="Wei C.L."/>
            <person name="Yagi K."/>
            <person name="Yamanishi H."/>
            <person name="Zabarovsky E."/>
            <person name="Zhu S."/>
            <person name="Zimmer A."/>
            <person name="Hide W."/>
            <person name="Bult C."/>
            <person name="Grimmond S.M."/>
            <person name="Teasdale R.D."/>
            <person name="Liu E.T."/>
            <person name="Brusic V."/>
            <person name="Quackenbush J."/>
            <person name="Wahlestedt C."/>
            <person name="Mattick J.S."/>
            <person name="Hume D.A."/>
            <person name="Kai C."/>
            <person name="Sasaki D."/>
            <person name="Tomaru Y."/>
            <person name="Fukuda S."/>
            <person name="Kanamori-Katayama M."/>
            <person name="Suzuki M."/>
            <person name="Aoki J."/>
            <person name="Arakawa T."/>
            <person name="Iida J."/>
            <person name="Imamura K."/>
            <person name="Itoh M."/>
            <person name="Kato T."/>
            <person name="Kawaji H."/>
            <person name="Kawagashira N."/>
            <person name="Kawashima T."/>
            <person name="Kojima M."/>
            <person name="Kondo S."/>
            <person name="Konno H."/>
            <person name="Nakano K."/>
            <person name="Ninomiya N."/>
            <person name="Nishio T."/>
            <person name="Okada M."/>
            <person name="Plessy C."/>
            <person name="Shibata K."/>
            <person name="Shiraki T."/>
            <person name="Suzuki S."/>
            <person name="Tagami M."/>
            <person name="Waki K."/>
            <person name="Watahiki A."/>
            <person name="Okamura-Oho Y."/>
            <person name="Suzuki H."/>
            <person name="Kawai J."/>
            <person name="Hayashizaki Y."/>
        </authorList>
    </citation>
    <scope>NUCLEOTIDE SEQUENCE [LARGE SCALE MRNA] OF 312-446</scope>
    <source>
        <strain>C57BL/6J</strain>
        <tissue>Head</tissue>
    </source>
</reference>
<reference key="3">
    <citation type="journal article" date="2007" name="Proc. Natl. Acad. Sci. U.S.A.">
        <title>Large-scale phosphorylation analysis of mouse liver.</title>
        <authorList>
            <person name="Villen J."/>
            <person name="Beausoleil S.A."/>
            <person name="Gerber S.A."/>
            <person name="Gygi S.P."/>
        </authorList>
    </citation>
    <scope>PHOSPHORYLATION [LARGE SCALE ANALYSIS] AT SER-376</scope>
    <scope>IDENTIFICATION BY MASS SPECTROMETRY [LARGE SCALE ANALYSIS]</scope>
    <source>
        <tissue>Liver</tissue>
    </source>
</reference>
<reference key="4">
    <citation type="journal article" date="2010" name="Cell">
        <title>A tissue-specific atlas of mouse protein phosphorylation and expression.</title>
        <authorList>
            <person name="Huttlin E.L."/>
            <person name="Jedrychowski M.P."/>
            <person name="Elias J.E."/>
            <person name="Goswami T."/>
            <person name="Rad R."/>
            <person name="Beausoleil S.A."/>
            <person name="Villen J."/>
            <person name="Haas W."/>
            <person name="Sowa M.E."/>
            <person name="Gygi S.P."/>
        </authorList>
    </citation>
    <scope>PHOSPHORYLATION [LARGE SCALE ANALYSIS] AT THR-216; THR-220; SER-365 AND SER-376</scope>
    <scope>IDENTIFICATION BY MASS SPECTROMETRY [LARGE SCALE ANALYSIS]</scope>
    <source>
        <tissue>Brain</tissue>
        <tissue>Kidney</tissue>
        <tissue>Liver</tissue>
        <tissue>Lung</tissue>
        <tissue>Pancreas</tissue>
        <tissue>Spleen</tissue>
        <tissue>Testis</tissue>
    </source>
</reference>
<reference key="5">
    <citation type="journal article" date="2020" name="J. Cell Biol.">
        <title>The function of GORASPs in Golgi apparatus organization in vivo.</title>
        <authorList>
            <person name="Grond R."/>
            <person name="Veenendaal T."/>
            <person name="Duran J.M."/>
            <person name="Raote I."/>
            <person name="van Es J.H."/>
            <person name="Corstjens S."/>
            <person name="Delfgou L."/>
            <person name="El Haddouti B."/>
            <person name="Malhotra V."/>
            <person name="Rabouille C."/>
        </authorList>
    </citation>
    <scope>FUNCTION</scope>
    <scope>DISRUPTION PHENOTYPE</scope>
</reference>
<dbReference type="EMBL" id="BC012251">
    <property type="protein sequence ID" value="AAH12251.1"/>
    <property type="molecule type" value="mRNA"/>
</dbReference>
<dbReference type="EMBL" id="AK017293">
    <property type="protein sequence ID" value="BAB30676.1"/>
    <property type="status" value="ALT_INIT"/>
    <property type="molecule type" value="mRNA"/>
</dbReference>
<dbReference type="CCDS" id="CCDS23619.1"/>
<dbReference type="RefSeq" id="NP_083252.1">
    <property type="nucleotide sequence ID" value="NM_028976.2"/>
</dbReference>
<dbReference type="SMR" id="Q91X51"/>
<dbReference type="BioGRID" id="216799">
    <property type="interactions" value="22"/>
</dbReference>
<dbReference type="FunCoup" id="Q91X51">
    <property type="interactions" value="1037"/>
</dbReference>
<dbReference type="IntAct" id="Q91X51">
    <property type="interactions" value="25"/>
</dbReference>
<dbReference type="STRING" id="10090.ENSMUSP00000035099"/>
<dbReference type="GlyGen" id="Q91X51">
    <property type="glycosylation" value="2 sites"/>
</dbReference>
<dbReference type="iPTMnet" id="Q91X51"/>
<dbReference type="PhosphoSitePlus" id="Q91X51"/>
<dbReference type="PaxDb" id="10090-ENSMUSP00000035099"/>
<dbReference type="ProteomicsDB" id="271253"/>
<dbReference type="Pumba" id="Q91X51"/>
<dbReference type="Antibodypedia" id="28859">
    <property type="antibodies" value="281 antibodies from 33 providers"/>
</dbReference>
<dbReference type="DNASU" id="74498"/>
<dbReference type="Ensembl" id="ENSMUST00000035099.9">
    <property type="protein sequence ID" value="ENSMUSP00000035099.8"/>
    <property type="gene ID" value="ENSMUSG00000032513.9"/>
</dbReference>
<dbReference type="GeneID" id="74498"/>
<dbReference type="KEGG" id="mmu:74498"/>
<dbReference type="UCSC" id="uc009sbq.1">
    <property type="organism name" value="mouse"/>
</dbReference>
<dbReference type="AGR" id="MGI:1921748"/>
<dbReference type="CTD" id="64689"/>
<dbReference type="MGI" id="MGI:1921748">
    <property type="gene designation" value="Gorasp1"/>
</dbReference>
<dbReference type="VEuPathDB" id="HostDB:ENSMUSG00000032513"/>
<dbReference type="eggNOG" id="KOG3834">
    <property type="taxonomic scope" value="Eukaryota"/>
</dbReference>
<dbReference type="GeneTree" id="ENSGT00390000008686"/>
<dbReference type="HOGENOM" id="CLU_025095_1_0_1"/>
<dbReference type="InParanoid" id="Q91X51"/>
<dbReference type="OMA" id="NGYIEAP"/>
<dbReference type="OrthoDB" id="3318at2759"/>
<dbReference type="PhylomeDB" id="Q91X51"/>
<dbReference type="TreeFam" id="TF314053"/>
<dbReference type="Reactome" id="R-MMU-162658">
    <property type="pathway name" value="Golgi Cisternae Pericentriolar Stack Reorganization"/>
</dbReference>
<dbReference type="Reactome" id="R-MMU-204005">
    <property type="pathway name" value="COPII-mediated vesicle transport"/>
</dbReference>
<dbReference type="Reactome" id="R-MMU-6807878">
    <property type="pathway name" value="COPI-mediated anterograde transport"/>
</dbReference>
<dbReference type="BioGRID-ORCS" id="74498">
    <property type="hits" value="1 hit in 76 CRISPR screens"/>
</dbReference>
<dbReference type="ChiTaRS" id="Gorasp1">
    <property type="organism name" value="mouse"/>
</dbReference>
<dbReference type="PRO" id="PR:Q91X51"/>
<dbReference type="Proteomes" id="UP000000589">
    <property type="component" value="Chromosome 9"/>
</dbReference>
<dbReference type="RNAct" id="Q91X51">
    <property type="molecule type" value="protein"/>
</dbReference>
<dbReference type="Bgee" id="ENSMUSG00000032513">
    <property type="expression patterns" value="Expressed in yolk sac and 237 other cell types or tissues"/>
</dbReference>
<dbReference type="ExpressionAtlas" id="Q91X51">
    <property type="expression patterns" value="baseline and differential"/>
</dbReference>
<dbReference type="GO" id="GO:0005794">
    <property type="term" value="C:Golgi apparatus"/>
    <property type="evidence" value="ECO:0000314"/>
    <property type="project" value="MGI"/>
</dbReference>
<dbReference type="GO" id="GO:0016020">
    <property type="term" value="C:membrane"/>
    <property type="evidence" value="ECO:0007669"/>
    <property type="project" value="UniProtKB-KW"/>
</dbReference>
<dbReference type="GO" id="GO:0046872">
    <property type="term" value="F:metal ion binding"/>
    <property type="evidence" value="ECO:0007669"/>
    <property type="project" value="UniProtKB-KW"/>
</dbReference>
<dbReference type="GO" id="GO:0061951">
    <property type="term" value="P:establishment of protein localization to plasma membrane"/>
    <property type="evidence" value="ECO:0000250"/>
    <property type="project" value="UniProtKB"/>
</dbReference>
<dbReference type="GO" id="GO:0007030">
    <property type="term" value="P:Golgi organization"/>
    <property type="evidence" value="ECO:0000315"/>
    <property type="project" value="MGI"/>
</dbReference>
<dbReference type="GO" id="GO:0090161">
    <property type="term" value="P:Golgi ribbon formation"/>
    <property type="evidence" value="ECO:0000316"/>
    <property type="project" value="UniProtKB"/>
</dbReference>
<dbReference type="GO" id="GO:0050774">
    <property type="term" value="P:negative regulation of dendrite morphogenesis"/>
    <property type="evidence" value="ECO:0000250"/>
    <property type="project" value="UniProtKB"/>
</dbReference>
<dbReference type="GO" id="GO:0006487">
    <property type="term" value="P:protein N-linked glycosylation"/>
    <property type="evidence" value="ECO:0000315"/>
    <property type="project" value="MGI"/>
</dbReference>
<dbReference type="GO" id="GO:0015031">
    <property type="term" value="P:protein transport"/>
    <property type="evidence" value="ECO:0007669"/>
    <property type="project" value="UniProtKB-KW"/>
</dbReference>
<dbReference type="FunFam" id="2.30.42.10:FF:000026">
    <property type="entry name" value="Golgi reassembly stacking protein 2"/>
    <property type="match status" value="1"/>
</dbReference>
<dbReference type="FunFam" id="2.30.42.10:FF:000056">
    <property type="entry name" value="Golgi reassembly-stacking protein 2 isoform 1"/>
    <property type="match status" value="1"/>
</dbReference>
<dbReference type="Gene3D" id="2.30.42.10">
    <property type="match status" value="2"/>
</dbReference>
<dbReference type="InterPro" id="IPR007583">
    <property type="entry name" value="GRASP55_65"/>
</dbReference>
<dbReference type="InterPro" id="IPR024958">
    <property type="entry name" value="GRASP_PDZ"/>
</dbReference>
<dbReference type="InterPro" id="IPR036034">
    <property type="entry name" value="PDZ_sf"/>
</dbReference>
<dbReference type="PANTHER" id="PTHR12893">
    <property type="entry name" value="GOLGI REASSEMBLY STACKING PROTEIN GRASP"/>
    <property type="match status" value="1"/>
</dbReference>
<dbReference type="PANTHER" id="PTHR12893:SF2">
    <property type="entry name" value="GOLGI REASSEMBLY-STACKING PROTEIN 1"/>
    <property type="match status" value="1"/>
</dbReference>
<dbReference type="Pfam" id="PF04495">
    <property type="entry name" value="GRASP55_65"/>
    <property type="match status" value="1"/>
</dbReference>
<dbReference type="SUPFAM" id="SSF50156">
    <property type="entry name" value="PDZ domain-like"/>
    <property type="match status" value="2"/>
</dbReference>
<dbReference type="PROSITE" id="PS51865">
    <property type="entry name" value="PDZ_GRASP"/>
    <property type="match status" value="2"/>
</dbReference>
<comment type="function">
    <text evidence="2 3 7">Key structural protein of the Golgi apparatus (PubMed:32573693). The membrane cisternae of the Golgi apparatus adhere to each other to form stacks, which are aligned side by side to form the Golgi ribbon (PubMed:32573693). Acting in concert with GORASP2/GRASP55, is required for the formation and maintenance of the Golgi ribbon, and may be dispensable for the formation of stacks (PubMed:32573693). However, other studies suggest that GORASP1 plays an important role in assembly and membrane stacking of the cisternae, and in the reassembly of Golgi stacks after breakdown during mitosis (By similarity). Caspase-mediated cleavage of GORASP1 is required for fragmentation of the Golgi during apoptosis (By similarity). Also mediates, via its interaction with GOLGA2/GM130, the docking of transport vesicles with the Golgi membranes (By similarity). Mediates ER stress-induced unconventional (ER/Golgi-independent) trafficking of core-glycosylated CFTR to cell membrane (By similarity).</text>
</comment>
<comment type="subunit">
    <text evidence="1 2">Homodimer. Forms higher-order oligomers under interphase but not mitotic conditions. Dimers of the protein on one membrane might be able to interact with dimers on another and so stack cisternae. Interacts with the C-terminus of GOLGA2/GM130 under both mitotic and non-mitotic conditions. The interaction is critical for the correct targeting of both proteins to the cis-Golgi. Interacts with TMED2 and TMED3.</text>
</comment>
<comment type="subcellular location">
    <subcellularLocation>
        <location evidence="2">Golgi apparatus</location>
        <location evidence="2">cis-Golgi network membrane</location>
        <topology evidence="2">Peripheral membrane protein</topology>
        <orientation evidence="2">Cytoplasmic side</orientation>
    </subcellularLocation>
</comment>
<comment type="PTM">
    <text evidence="2">Phosphorylated by CDC2/B1 and PLK kinases during mitosis. Phosphorylation cycle correlates with the cisternal stacking cycle. Phosphorylation of the homodimer prevents the association of dimers into higher-order oligomers, leading to cisternal unstacking.</text>
</comment>
<comment type="PTM">
    <text evidence="2">Target for caspase-3 cleavage during apoptosis. The cleavage contributes to Golgi fragmentation and occurs very early in the execution phase of apoptosis.</text>
</comment>
<comment type="PTM">
    <text evidence="2">Myristoylated.</text>
</comment>
<comment type="disruption phenotype">
    <text evidence="7">No visible loss of Golgi stacking in intestinal tissue at postnatal day 10, 21 or 42, in combination with conditional knockout of GORASP2/GRASP55 (PubMed:32573693). However, cisternal cross-sectional diameters are reduced and rims of the Golgi cisternae are vacuolated (PubMed:32573693). Abolishes expression of GOLGA2/GM130 in the cisternae (PubMed:32573693).</text>
</comment>
<comment type="similarity">
    <text evidence="8">Belongs to the GORASP family.</text>
</comment>
<comment type="sequence caution" evidence="8">
    <conflict type="erroneous initiation">
        <sequence resource="EMBL-CDS" id="BAB30676"/>
    </conflict>
</comment>
<gene>
    <name type="primary">Gorasp1</name>
</gene>
<organism>
    <name type="scientific">Mus musculus</name>
    <name type="common">Mouse</name>
    <dbReference type="NCBI Taxonomy" id="10090"/>
    <lineage>
        <taxon>Eukaryota</taxon>
        <taxon>Metazoa</taxon>
        <taxon>Chordata</taxon>
        <taxon>Craniata</taxon>
        <taxon>Vertebrata</taxon>
        <taxon>Euteleostomi</taxon>
        <taxon>Mammalia</taxon>
        <taxon>Eutheria</taxon>
        <taxon>Euarchontoglires</taxon>
        <taxon>Glires</taxon>
        <taxon>Rodentia</taxon>
        <taxon>Myomorpha</taxon>
        <taxon>Muroidea</taxon>
        <taxon>Muridae</taxon>
        <taxon>Murinae</taxon>
        <taxon>Mus</taxon>
        <taxon>Mus</taxon>
    </lineage>
</organism>
<sequence>MGLGASSEQPAGGEGFHLHGVQENSPAQQAGLEPYFDFIITIGHSRLNKENDTLKALLKANVEKPVKLEVFNMKTMKVREVEVVPSNMWGGQGLLGASVRFCSFRRASEHVWHVLDVEPSSPAALAGLCPYTDYIVGSDQILQESEDFFTLIESHEGKPLKLMVYNSESDSCREVTVTPNAAWGGEGSLGCGIGYGYLHRIPTQPSSQHKKPPGATPPGTPATTSQLTAFPLGAPPPWPIPQDSSGPELGSRQSDFMEALPQVPGSFMEGQLLGPGSPSHGAADCGGCLRAMEIPLQPPPPVQRVMDPGFLDVSGMSLLDSSNISVCPSLSSSTVLTSTAVSVSGPEDIGSSSSSHERGGEATWSGSEFEISFPDSPGAQAQADHLPRLTLPDGLTSAASPEEGLSAELLEAQTEEPADTASLDCRAETEGRASQAQATPDPEPGL</sequence>
<proteinExistence type="evidence at protein level"/>
<feature type="initiator methionine" description="Removed">
    <location>
        <position position="1"/>
    </location>
</feature>
<feature type="chain" id="PRO_0000087571" description="Golgi reassembly-stacking protein 1">
    <location>
        <begin position="2"/>
        <end position="446"/>
    </location>
</feature>
<feature type="domain" description="PDZ GRASP-type 1" evidence="4">
    <location>
        <begin position="14"/>
        <end position="104"/>
    </location>
</feature>
<feature type="domain" description="PDZ GRASP-type 2" evidence="4">
    <location>
        <begin position="110"/>
        <end position="198"/>
    </location>
</feature>
<feature type="region of interest" description="Disordered" evidence="6">
    <location>
        <begin position="1"/>
        <end position="20"/>
    </location>
</feature>
<feature type="region of interest" description="GRASP" evidence="5">
    <location>
        <begin position="14"/>
        <end position="214"/>
    </location>
</feature>
<feature type="region of interest" description="Essential for interaction with GOLGA2/GM130" evidence="1">
    <location>
        <begin position="189"/>
        <end position="201"/>
    </location>
</feature>
<feature type="region of interest" description="Disordered" evidence="6">
    <location>
        <begin position="202"/>
        <end position="252"/>
    </location>
</feature>
<feature type="region of interest" description="Disordered" evidence="6">
    <location>
        <begin position="343"/>
        <end position="446"/>
    </location>
</feature>
<feature type="compositionally biased region" description="Low complexity" evidence="6">
    <location>
        <begin position="343"/>
        <end position="354"/>
    </location>
</feature>
<feature type="binding site" evidence="2">
    <location>
        <position position="17"/>
    </location>
    <ligand>
        <name>Zn(2+)</name>
        <dbReference type="ChEBI" id="CHEBI:29105"/>
    </ligand>
</feature>
<feature type="binding site" evidence="2">
    <location>
        <position position="19"/>
    </location>
    <ligand>
        <name>Zn(2+)</name>
        <dbReference type="ChEBI" id="CHEBI:29105"/>
    </ligand>
</feature>
<feature type="binding site" evidence="2">
    <location>
        <position position="102"/>
    </location>
    <ligand>
        <name>Zn(2+)</name>
        <dbReference type="ChEBI" id="CHEBI:29105"/>
    </ligand>
</feature>
<feature type="modified residue" description="Phosphothreonine" evidence="10">
    <location>
        <position position="216"/>
    </location>
</feature>
<feature type="modified residue" description="Phosphothreonine" evidence="10">
    <location>
        <position position="220"/>
    </location>
</feature>
<feature type="modified residue" description="Phosphothreonine" evidence="3">
    <location>
        <position position="224"/>
    </location>
</feature>
<feature type="modified residue" description="Phosphoserine" evidence="10">
    <location>
        <position position="365"/>
    </location>
</feature>
<feature type="modified residue" description="Phosphoserine" evidence="2">
    <location>
        <position position="367"/>
    </location>
</feature>
<feature type="modified residue" description="Phosphoserine" evidence="9 10">
    <location>
        <position position="376"/>
    </location>
</feature>
<feature type="lipid moiety-binding region" description="N-myristoyl glycine" evidence="2">
    <location>
        <position position="2"/>
    </location>
</feature>
<evidence type="ECO:0000250" key="1"/>
<evidence type="ECO:0000250" key="2">
    <source>
        <dbReference type="UniProtKB" id="O35254"/>
    </source>
</evidence>
<evidence type="ECO:0000250" key="3">
    <source>
        <dbReference type="UniProtKB" id="Q9BQQ3"/>
    </source>
</evidence>
<evidence type="ECO:0000255" key="4">
    <source>
        <dbReference type="PROSITE-ProRule" id="PRU01212"/>
    </source>
</evidence>
<evidence type="ECO:0000255" key="5">
    <source>
        <dbReference type="PROSITE-ProRule" id="PRU01214"/>
    </source>
</evidence>
<evidence type="ECO:0000256" key="6">
    <source>
        <dbReference type="SAM" id="MobiDB-lite"/>
    </source>
</evidence>
<evidence type="ECO:0000269" key="7">
    <source>
    </source>
</evidence>
<evidence type="ECO:0000305" key="8"/>
<evidence type="ECO:0007744" key="9">
    <source>
    </source>
</evidence>
<evidence type="ECO:0007744" key="10">
    <source>
    </source>
</evidence>